<protein>
    <recommendedName>
        <fullName evidence="2">N(4)-acetylcytidine amidohydrolase</fullName>
        <shortName evidence="2">ac4C amidohydrolase</shortName>
        <ecNumber evidence="2">3.5.1.135</ecNumber>
    </recommendedName>
</protein>
<feature type="chain" id="PRO_1000044955" description="N(4)-acetylcytidine amidohydrolase">
    <location>
        <begin position="1"/>
        <end position="103"/>
    </location>
</feature>
<feature type="domain" description="ASCH" evidence="1">
    <location>
        <begin position="7"/>
        <end position="93"/>
    </location>
</feature>
<feature type="active site" description="Proton acceptor" evidence="2">
    <location>
        <position position="21"/>
    </location>
</feature>
<feature type="active site" description="Nucleophile" evidence="2">
    <location>
        <position position="24"/>
    </location>
</feature>
<feature type="active site" description="Proton donor" evidence="2">
    <location>
        <position position="74"/>
    </location>
</feature>
<sequence length="103" mass="11848">MLLSKITFFERFEQDILSGAKTITLRDETESHVVAGQILPVSTFETDRWFCDIQIIDVMPVKLTELTDVHAEQENMTLPQLRSVIAEIYPGLEQLYMISFVVL</sequence>
<comment type="function">
    <text evidence="2">Catalyzes the hydrolysis of N(4)-acetylcytidine (ac4C).</text>
</comment>
<comment type="catalytic activity">
    <reaction evidence="2">
        <text>N(4)-acetylcytidine + H2O = cytidine + acetate + H(+)</text>
        <dbReference type="Rhea" id="RHEA:62932"/>
        <dbReference type="ChEBI" id="CHEBI:15377"/>
        <dbReference type="ChEBI" id="CHEBI:15378"/>
        <dbReference type="ChEBI" id="CHEBI:17562"/>
        <dbReference type="ChEBI" id="CHEBI:30089"/>
        <dbReference type="ChEBI" id="CHEBI:70989"/>
        <dbReference type="EC" id="3.5.1.135"/>
    </reaction>
</comment>
<comment type="catalytic activity">
    <reaction evidence="2">
        <text>N(4)-acetyl-2'-deoxycytidine + H2O = 2'-deoxycytidine + acetate + H(+)</text>
        <dbReference type="Rhea" id="RHEA:62936"/>
        <dbReference type="ChEBI" id="CHEBI:15377"/>
        <dbReference type="ChEBI" id="CHEBI:15378"/>
        <dbReference type="ChEBI" id="CHEBI:15698"/>
        <dbReference type="ChEBI" id="CHEBI:30089"/>
        <dbReference type="ChEBI" id="CHEBI:146133"/>
        <dbReference type="EC" id="3.5.1.135"/>
    </reaction>
</comment>
<comment type="catalytic activity">
    <reaction evidence="2">
        <text>N(4)-acetylcytosine + H2O = cytosine + acetate + H(+)</text>
        <dbReference type="Rhea" id="RHEA:62940"/>
        <dbReference type="ChEBI" id="CHEBI:15377"/>
        <dbReference type="ChEBI" id="CHEBI:15378"/>
        <dbReference type="ChEBI" id="CHEBI:16040"/>
        <dbReference type="ChEBI" id="CHEBI:30089"/>
        <dbReference type="ChEBI" id="CHEBI:146134"/>
        <dbReference type="EC" id="3.5.1.135"/>
    </reaction>
</comment>
<comment type="similarity">
    <text evidence="2">Belongs to the N(4)-acetylcytidine amidohydrolase family.</text>
</comment>
<keyword id="KW-0378">Hydrolase</keyword>
<dbReference type="EC" id="3.5.1.135" evidence="2"/>
<dbReference type="EMBL" id="CP000681">
    <property type="protein sequence ID" value="ABP75999.1"/>
    <property type="molecule type" value="Genomic_DNA"/>
</dbReference>
<dbReference type="SMR" id="A4Y7R6"/>
<dbReference type="STRING" id="319224.Sputcn32_2278"/>
<dbReference type="KEGG" id="spc:Sputcn32_2278"/>
<dbReference type="eggNOG" id="COG3097">
    <property type="taxonomic scope" value="Bacteria"/>
</dbReference>
<dbReference type="HOGENOM" id="CLU_152586_0_0_6"/>
<dbReference type="GO" id="GO:0005829">
    <property type="term" value="C:cytosol"/>
    <property type="evidence" value="ECO:0007669"/>
    <property type="project" value="TreeGrafter"/>
</dbReference>
<dbReference type="GO" id="GO:0016813">
    <property type="term" value="F:hydrolase activity, acting on carbon-nitrogen (but not peptide) bonds, in linear amidines"/>
    <property type="evidence" value="ECO:0007669"/>
    <property type="project" value="UniProtKB-UniRule"/>
</dbReference>
<dbReference type="GO" id="GO:0106251">
    <property type="term" value="F:N4-acetylcytidine amidohydrolase activity"/>
    <property type="evidence" value="ECO:0007669"/>
    <property type="project" value="RHEA"/>
</dbReference>
<dbReference type="CDD" id="cd06552">
    <property type="entry name" value="ASCH_yqfb_like"/>
    <property type="match status" value="1"/>
</dbReference>
<dbReference type="Gene3D" id="2.30.130.30">
    <property type="entry name" value="Hypothetical protein"/>
    <property type="match status" value="1"/>
</dbReference>
<dbReference type="HAMAP" id="MF_00684">
    <property type="entry name" value="ac4C_amidohydr"/>
    <property type="match status" value="1"/>
</dbReference>
<dbReference type="InterPro" id="IPR008314">
    <property type="entry name" value="AC4CH"/>
</dbReference>
<dbReference type="InterPro" id="IPR007374">
    <property type="entry name" value="ASCH_domain"/>
</dbReference>
<dbReference type="InterPro" id="IPR015947">
    <property type="entry name" value="PUA-like_sf"/>
</dbReference>
<dbReference type="NCBIfam" id="NF003443">
    <property type="entry name" value="PRK04980.1"/>
    <property type="match status" value="1"/>
</dbReference>
<dbReference type="PANTHER" id="PTHR38088">
    <property type="entry name" value="UCP029143 FAMILY PROTEIN"/>
    <property type="match status" value="1"/>
</dbReference>
<dbReference type="PANTHER" id="PTHR38088:SF2">
    <property type="entry name" value="UCP029143 FAMILY PROTEIN"/>
    <property type="match status" value="1"/>
</dbReference>
<dbReference type="Pfam" id="PF04266">
    <property type="entry name" value="ASCH"/>
    <property type="match status" value="1"/>
</dbReference>
<dbReference type="PIRSF" id="PIRSF029143">
    <property type="entry name" value="UCP029143"/>
    <property type="match status" value="1"/>
</dbReference>
<dbReference type="SMART" id="SM01022">
    <property type="entry name" value="ASCH"/>
    <property type="match status" value="1"/>
</dbReference>
<dbReference type="SUPFAM" id="SSF88697">
    <property type="entry name" value="PUA domain-like"/>
    <property type="match status" value="1"/>
</dbReference>
<proteinExistence type="inferred from homology"/>
<organism>
    <name type="scientific">Shewanella putrefaciens (strain CN-32 / ATCC BAA-453)</name>
    <dbReference type="NCBI Taxonomy" id="319224"/>
    <lineage>
        <taxon>Bacteria</taxon>
        <taxon>Pseudomonadati</taxon>
        <taxon>Pseudomonadota</taxon>
        <taxon>Gammaproteobacteria</taxon>
        <taxon>Alteromonadales</taxon>
        <taxon>Shewanellaceae</taxon>
        <taxon>Shewanella</taxon>
    </lineage>
</organism>
<accession>A4Y7R6</accession>
<gene>
    <name type="ordered locus">Sputcn32_2278</name>
</gene>
<evidence type="ECO:0000255" key="1"/>
<evidence type="ECO:0000255" key="2">
    <source>
        <dbReference type="HAMAP-Rule" id="MF_00684"/>
    </source>
</evidence>
<name>AC4CH_SHEPC</name>
<reference key="1">
    <citation type="submission" date="2007-04" db="EMBL/GenBank/DDBJ databases">
        <title>Complete sequence of Shewanella putrefaciens CN-32.</title>
        <authorList>
            <consortium name="US DOE Joint Genome Institute"/>
            <person name="Copeland A."/>
            <person name="Lucas S."/>
            <person name="Lapidus A."/>
            <person name="Barry K."/>
            <person name="Detter J.C."/>
            <person name="Glavina del Rio T."/>
            <person name="Hammon N."/>
            <person name="Israni S."/>
            <person name="Dalin E."/>
            <person name="Tice H."/>
            <person name="Pitluck S."/>
            <person name="Chain P."/>
            <person name="Malfatti S."/>
            <person name="Shin M."/>
            <person name="Vergez L."/>
            <person name="Schmutz J."/>
            <person name="Larimer F."/>
            <person name="Land M."/>
            <person name="Hauser L."/>
            <person name="Kyrpides N."/>
            <person name="Mikhailova N."/>
            <person name="Romine M.F."/>
            <person name="Fredrickson J."/>
            <person name="Tiedje J."/>
            <person name="Richardson P."/>
        </authorList>
    </citation>
    <scope>NUCLEOTIDE SEQUENCE [LARGE SCALE GENOMIC DNA]</scope>
    <source>
        <strain>CN-32 / ATCC BAA-453</strain>
    </source>
</reference>